<reference key="1">
    <citation type="journal article" date="2010" name="Genome Biol.">
        <title>Structure and dynamics of the pan-genome of Streptococcus pneumoniae and closely related species.</title>
        <authorList>
            <person name="Donati C."/>
            <person name="Hiller N.L."/>
            <person name="Tettelin H."/>
            <person name="Muzzi A."/>
            <person name="Croucher N.J."/>
            <person name="Angiuoli S.V."/>
            <person name="Oggioni M."/>
            <person name="Dunning Hotopp J.C."/>
            <person name="Hu F.Z."/>
            <person name="Riley D.R."/>
            <person name="Covacci A."/>
            <person name="Mitchell T.J."/>
            <person name="Bentley S.D."/>
            <person name="Kilian M."/>
            <person name="Ehrlich G.D."/>
            <person name="Rappuoli R."/>
            <person name="Moxon E.R."/>
            <person name="Masignani V."/>
        </authorList>
    </citation>
    <scope>NUCLEOTIDE SEQUENCE [LARGE SCALE GENOMIC DNA]</scope>
    <source>
        <strain>P1031</strain>
    </source>
</reference>
<dbReference type="EC" id="2.7.7.6" evidence="1"/>
<dbReference type="EMBL" id="CP000920">
    <property type="protein sequence ID" value="ACO21165.1"/>
    <property type="molecule type" value="Genomic_DNA"/>
</dbReference>
<dbReference type="SMR" id="C1CM73"/>
<dbReference type="KEGG" id="spp:SPP_1755"/>
<dbReference type="HOGENOM" id="CLU_125406_0_0_9"/>
<dbReference type="GO" id="GO:0000428">
    <property type="term" value="C:DNA-directed RNA polymerase complex"/>
    <property type="evidence" value="ECO:0007669"/>
    <property type="project" value="UniProtKB-KW"/>
</dbReference>
<dbReference type="GO" id="GO:0003677">
    <property type="term" value="F:DNA binding"/>
    <property type="evidence" value="ECO:0007669"/>
    <property type="project" value="UniProtKB-UniRule"/>
</dbReference>
<dbReference type="GO" id="GO:0003899">
    <property type="term" value="F:DNA-directed RNA polymerase activity"/>
    <property type="evidence" value="ECO:0007669"/>
    <property type="project" value="UniProtKB-UniRule"/>
</dbReference>
<dbReference type="GO" id="GO:0006351">
    <property type="term" value="P:DNA-templated transcription"/>
    <property type="evidence" value="ECO:0007669"/>
    <property type="project" value="UniProtKB-UniRule"/>
</dbReference>
<dbReference type="Gene3D" id="3.90.940.10">
    <property type="match status" value="1"/>
</dbReference>
<dbReference type="HAMAP" id="MF_00366">
    <property type="entry name" value="RNApol_bact_RpoZ"/>
    <property type="match status" value="1"/>
</dbReference>
<dbReference type="InterPro" id="IPR003716">
    <property type="entry name" value="DNA-dir_RNA_pol_omega"/>
</dbReference>
<dbReference type="InterPro" id="IPR006110">
    <property type="entry name" value="Pol_omega/Rpo6/RPB6"/>
</dbReference>
<dbReference type="InterPro" id="IPR036161">
    <property type="entry name" value="RPB6/omega-like_sf"/>
</dbReference>
<dbReference type="NCBIfam" id="TIGR00690">
    <property type="entry name" value="rpoZ"/>
    <property type="match status" value="1"/>
</dbReference>
<dbReference type="PANTHER" id="PTHR34476">
    <property type="entry name" value="DNA-DIRECTED RNA POLYMERASE SUBUNIT OMEGA"/>
    <property type="match status" value="1"/>
</dbReference>
<dbReference type="PANTHER" id="PTHR34476:SF1">
    <property type="entry name" value="DNA-DIRECTED RNA POLYMERASE SUBUNIT OMEGA"/>
    <property type="match status" value="1"/>
</dbReference>
<dbReference type="Pfam" id="PF01192">
    <property type="entry name" value="RNA_pol_Rpb6"/>
    <property type="match status" value="1"/>
</dbReference>
<dbReference type="SMART" id="SM01409">
    <property type="entry name" value="RNA_pol_Rpb6"/>
    <property type="match status" value="1"/>
</dbReference>
<dbReference type="SUPFAM" id="SSF63562">
    <property type="entry name" value="RPB6/omega subunit-like"/>
    <property type="match status" value="1"/>
</dbReference>
<organism>
    <name type="scientific">Streptococcus pneumoniae (strain P1031)</name>
    <dbReference type="NCBI Taxonomy" id="488223"/>
    <lineage>
        <taxon>Bacteria</taxon>
        <taxon>Bacillati</taxon>
        <taxon>Bacillota</taxon>
        <taxon>Bacilli</taxon>
        <taxon>Lactobacillales</taxon>
        <taxon>Streptococcaceae</taxon>
        <taxon>Streptococcus</taxon>
    </lineage>
</organism>
<comment type="function">
    <text evidence="1">Promotes RNA polymerase assembly. Latches the N- and C-terminal regions of the beta' subunit thereby facilitating its interaction with the beta and alpha subunits.</text>
</comment>
<comment type="catalytic activity">
    <reaction evidence="1">
        <text>RNA(n) + a ribonucleoside 5'-triphosphate = RNA(n+1) + diphosphate</text>
        <dbReference type="Rhea" id="RHEA:21248"/>
        <dbReference type="Rhea" id="RHEA-COMP:14527"/>
        <dbReference type="Rhea" id="RHEA-COMP:17342"/>
        <dbReference type="ChEBI" id="CHEBI:33019"/>
        <dbReference type="ChEBI" id="CHEBI:61557"/>
        <dbReference type="ChEBI" id="CHEBI:140395"/>
        <dbReference type="EC" id="2.7.7.6"/>
    </reaction>
</comment>
<comment type="subunit">
    <text evidence="1">The RNAP catalytic core consists of 2 alpha, 1 beta, 1 beta' and 1 omega subunit. When a sigma factor is associated with the core the holoenzyme is formed, which can initiate transcription.</text>
</comment>
<comment type="similarity">
    <text evidence="1">Belongs to the RNA polymerase subunit omega family.</text>
</comment>
<gene>
    <name evidence="1" type="primary">rpoZ</name>
    <name type="ordered locus">SPP_1755</name>
</gene>
<protein>
    <recommendedName>
        <fullName evidence="1">DNA-directed RNA polymerase subunit omega</fullName>
        <shortName evidence="1">RNAP omega subunit</shortName>
        <ecNumber evidence="1">2.7.7.6</ecNumber>
    </recommendedName>
    <alternativeName>
        <fullName evidence="1">RNA polymerase omega subunit</fullName>
    </alternativeName>
    <alternativeName>
        <fullName evidence="1">Transcriptase subunit omega</fullName>
    </alternativeName>
</protein>
<evidence type="ECO:0000255" key="1">
    <source>
        <dbReference type="HAMAP-Rule" id="MF_00366"/>
    </source>
</evidence>
<evidence type="ECO:0000256" key="2">
    <source>
        <dbReference type="SAM" id="MobiDB-lite"/>
    </source>
</evidence>
<keyword id="KW-0240">DNA-directed RNA polymerase</keyword>
<keyword id="KW-0548">Nucleotidyltransferase</keyword>
<keyword id="KW-0804">Transcription</keyword>
<keyword id="KW-0808">Transferase</keyword>
<feature type="chain" id="PRO_1000133756" description="DNA-directed RNA polymerase subunit omega">
    <location>
        <begin position="1"/>
        <end position="103"/>
    </location>
</feature>
<feature type="region of interest" description="Disordered" evidence="2">
    <location>
        <begin position="52"/>
        <end position="103"/>
    </location>
</feature>
<feature type="compositionally biased region" description="Basic and acidic residues" evidence="2">
    <location>
        <begin position="62"/>
        <end position="103"/>
    </location>
</feature>
<proteinExistence type="inferred from homology"/>
<sequence>MLKPSIDTLLDKVPSKYSLVILEAKRAHELEAGAPATQGFKSEKSTLRALEEIESGNVTIHPDPEGKREAVRRRIEEEKRRKEEEEKKIKEQIAKEKEDGEKI</sequence>
<name>RPOZ_STRZP</name>
<accession>C1CM73</accession>